<name>CMC4_ZYGRC</name>
<protein>
    <recommendedName>
        <fullName>Cx9C motif-containing protein 4, mitochondrial</fullName>
    </recommendedName>
</protein>
<accession>C5DT65</accession>
<comment type="subcellular location">
    <subcellularLocation>
        <location evidence="1">Mitochondrion intermembrane space</location>
    </subcellularLocation>
    <text evidence="1">Imported into the mitochondria via the mitochondrial disulfide relay system.</text>
</comment>
<comment type="domain">
    <text evidence="1">The twin Cx9C motifs are involved in the recognition by the mitochondrial disulfide relay system.</text>
</comment>
<comment type="similarity">
    <text evidence="3">Belongs to the CMC4 family.</text>
</comment>
<gene>
    <name type="primary">CMC4</name>
    <name type="ordered locus">ZYRO0C05830g</name>
</gene>
<evidence type="ECO:0000250" key="1"/>
<evidence type="ECO:0000255" key="2">
    <source>
        <dbReference type="PROSITE-ProRule" id="PRU01150"/>
    </source>
</evidence>
<evidence type="ECO:0000305" key="3"/>
<sequence>MAQQTPSCKPQACAIQNCLFSNNYNESRCDQAINDLYRCCEKFYKETNSKGVTPCCPKPDLLRTKMTQRGLQEE</sequence>
<proteinExistence type="inferred from homology"/>
<reference key="1">
    <citation type="journal article" date="2009" name="Genome Res.">
        <title>Comparative genomics of protoploid Saccharomycetaceae.</title>
        <authorList>
            <consortium name="The Genolevures Consortium"/>
            <person name="Souciet J.-L."/>
            <person name="Dujon B."/>
            <person name="Gaillardin C."/>
            <person name="Johnston M."/>
            <person name="Baret P.V."/>
            <person name="Cliften P."/>
            <person name="Sherman D.J."/>
            <person name="Weissenbach J."/>
            <person name="Westhof E."/>
            <person name="Wincker P."/>
            <person name="Jubin C."/>
            <person name="Poulain J."/>
            <person name="Barbe V."/>
            <person name="Segurens B."/>
            <person name="Artiguenave F."/>
            <person name="Anthouard V."/>
            <person name="Vacherie B."/>
            <person name="Val M.-E."/>
            <person name="Fulton R.S."/>
            <person name="Minx P."/>
            <person name="Wilson R."/>
            <person name="Durrens P."/>
            <person name="Jean G."/>
            <person name="Marck C."/>
            <person name="Martin T."/>
            <person name="Nikolski M."/>
            <person name="Rolland T."/>
            <person name="Seret M.-L."/>
            <person name="Casaregola S."/>
            <person name="Despons L."/>
            <person name="Fairhead C."/>
            <person name="Fischer G."/>
            <person name="Lafontaine I."/>
            <person name="Leh V."/>
            <person name="Lemaire M."/>
            <person name="de Montigny J."/>
            <person name="Neuveglise C."/>
            <person name="Thierry A."/>
            <person name="Blanc-Lenfle I."/>
            <person name="Bleykasten C."/>
            <person name="Diffels J."/>
            <person name="Fritsch E."/>
            <person name="Frangeul L."/>
            <person name="Goeffon A."/>
            <person name="Jauniaux N."/>
            <person name="Kachouri-Lafond R."/>
            <person name="Payen C."/>
            <person name="Potier S."/>
            <person name="Pribylova L."/>
            <person name="Ozanne C."/>
            <person name="Richard G.-F."/>
            <person name="Sacerdot C."/>
            <person name="Straub M.-L."/>
            <person name="Talla E."/>
        </authorList>
    </citation>
    <scope>NUCLEOTIDE SEQUENCE [LARGE SCALE GENOMIC DNA]</scope>
    <source>
        <strain>ATCC 2623 / CBS 732 / BCRC 21506 / NBRC 1130 / NCYC 568 / NRRL Y-229</strain>
    </source>
</reference>
<feature type="chain" id="PRO_0000408582" description="Cx9C motif-containing protein 4, mitochondrial">
    <location>
        <begin position="1"/>
        <end position="74"/>
    </location>
</feature>
<feature type="domain" description="CHCH" evidence="2">
    <location>
        <begin position="5"/>
        <end position="47"/>
    </location>
</feature>
<feature type="short sequence motif" description="Cx9C motif 1" evidence="2">
    <location>
        <begin position="8"/>
        <end position="18"/>
    </location>
</feature>
<feature type="short sequence motif" description="Cx9C motif 2" evidence="2">
    <location>
        <begin position="29"/>
        <end position="39"/>
    </location>
</feature>
<feature type="disulfide bond" evidence="2">
    <location>
        <begin position="8"/>
        <end position="39"/>
    </location>
</feature>
<feature type="disulfide bond" evidence="2">
    <location>
        <begin position="18"/>
        <end position="29"/>
    </location>
</feature>
<dbReference type="EMBL" id="CU928175">
    <property type="protein sequence ID" value="CAR26976.1"/>
    <property type="molecule type" value="Genomic_DNA"/>
</dbReference>
<dbReference type="RefSeq" id="XP_002495909.1">
    <property type="nucleotide sequence ID" value="XM_002495864.1"/>
</dbReference>
<dbReference type="SMR" id="C5DT65"/>
<dbReference type="FunCoup" id="C5DT65">
    <property type="interactions" value="116"/>
</dbReference>
<dbReference type="STRING" id="559307.C5DT65"/>
<dbReference type="GeneID" id="8203109"/>
<dbReference type="KEGG" id="zro:ZYRO0C05830g"/>
<dbReference type="HOGENOM" id="CLU_177210_0_0_1"/>
<dbReference type="InParanoid" id="C5DT65"/>
<dbReference type="Proteomes" id="UP000008536">
    <property type="component" value="Chromosome C"/>
</dbReference>
<dbReference type="GO" id="GO:0005758">
    <property type="term" value="C:mitochondrial intermembrane space"/>
    <property type="evidence" value="ECO:0007669"/>
    <property type="project" value="UniProtKB-SubCell"/>
</dbReference>
<dbReference type="Gene3D" id="1.10.287.1130">
    <property type="entry name" value="CytochromE C oxidase copper chaperone"/>
    <property type="match status" value="1"/>
</dbReference>
<dbReference type="InterPro" id="IPR027179">
    <property type="entry name" value="CMC4"/>
</dbReference>
<dbReference type="InterPro" id="IPR009069">
    <property type="entry name" value="Cys_alpha_HP_mot_SF"/>
</dbReference>
<dbReference type="PANTHER" id="PTHR15590">
    <property type="entry name" value="CX9C MOTIF-CONTAINING PROTEIN 4"/>
    <property type="match status" value="1"/>
</dbReference>
<dbReference type="PANTHER" id="PTHR15590:SF0">
    <property type="entry name" value="CX9C MOTIF-CONTAINING PROTEIN 4"/>
    <property type="match status" value="1"/>
</dbReference>
<dbReference type="Pfam" id="PF08991">
    <property type="entry name" value="CMC4"/>
    <property type="match status" value="1"/>
</dbReference>
<dbReference type="SUPFAM" id="SSF47072">
    <property type="entry name" value="Cysteine alpha-hairpin motif"/>
    <property type="match status" value="1"/>
</dbReference>
<dbReference type="PROSITE" id="PS51808">
    <property type="entry name" value="CHCH"/>
    <property type="match status" value="1"/>
</dbReference>
<organism>
    <name type="scientific">Zygosaccharomyces rouxii (strain ATCC 2623 / CBS 732 / NBRC 1130 / NCYC 568 / NRRL Y-229)</name>
    <dbReference type="NCBI Taxonomy" id="559307"/>
    <lineage>
        <taxon>Eukaryota</taxon>
        <taxon>Fungi</taxon>
        <taxon>Dikarya</taxon>
        <taxon>Ascomycota</taxon>
        <taxon>Saccharomycotina</taxon>
        <taxon>Saccharomycetes</taxon>
        <taxon>Saccharomycetales</taxon>
        <taxon>Saccharomycetaceae</taxon>
        <taxon>Zygosaccharomyces</taxon>
    </lineage>
</organism>
<keyword id="KW-1015">Disulfide bond</keyword>
<keyword id="KW-0496">Mitochondrion</keyword>
<keyword id="KW-1185">Reference proteome</keyword>
<keyword id="KW-0677">Repeat</keyword>